<evidence type="ECO:0000250" key="1"/>
<evidence type="ECO:0000250" key="2">
    <source>
        <dbReference type="UniProtKB" id="P03347"/>
    </source>
</evidence>
<evidence type="ECO:0000250" key="3">
    <source>
        <dbReference type="UniProtKB" id="P03366"/>
    </source>
</evidence>
<evidence type="ECO:0000250" key="4">
    <source>
        <dbReference type="UniProtKB" id="P03367"/>
    </source>
</evidence>
<evidence type="ECO:0000250" key="5">
    <source>
        <dbReference type="UniProtKB" id="P04585"/>
    </source>
</evidence>
<evidence type="ECO:0000250" key="6">
    <source>
        <dbReference type="UniProtKB" id="P12493"/>
    </source>
</evidence>
<evidence type="ECO:0000250" key="7">
    <source>
        <dbReference type="UniProtKB" id="P12497"/>
    </source>
</evidence>
<evidence type="ECO:0000255" key="8"/>
<evidence type="ECO:0000255" key="9">
    <source>
        <dbReference type="PROSITE-ProRule" id="PRU00047"/>
    </source>
</evidence>
<evidence type="ECO:0000255" key="10">
    <source>
        <dbReference type="PROSITE-ProRule" id="PRU00275"/>
    </source>
</evidence>
<evidence type="ECO:0000255" key="11">
    <source>
        <dbReference type="PROSITE-ProRule" id="PRU00405"/>
    </source>
</evidence>
<evidence type="ECO:0000255" key="12">
    <source>
        <dbReference type="PROSITE-ProRule" id="PRU00408"/>
    </source>
</evidence>
<evidence type="ECO:0000255" key="13">
    <source>
        <dbReference type="PROSITE-ProRule" id="PRU00450"/>
    </source>
</evidence>
<evidence type="ECO:0000255" key="14">
    <source>
        <dbReference type="PROSITE-ProRule" id="PRU00457"/>
    </source>
</evidence>
<evidence type="ECO:0000255" key="15">
    <source>
        <dbReference type="PROSITE-ProRule" id="PRU00506"/>
    </source>
</evidence>
<evidence type="ECO:0000255" key="16">
    <source>
        <dbReference type="PROSITE-ProRule" id="PRU10094"/>
    </source>
</evidence>
<evidence type="ECO:0000256" key="17">
    <source>
        <dbReference type="SAM" id="MobiDB-lite"/>
    </source>
</evidence>
<evidence type="ECO:0000269" key="18">
    <source>
    </source>
</evidence>
<evidence type="ECO:0000305" key="19"/>
<evidence type="ECO:0007829" key="20">
    <source>
        <dbReference type="PDB" id="1AAF"/>
    </source>
</evidence>
<dbReference type="EC" id="3.4.23.16"/>
<dbReference type="EC" id="2.7.7.49"/>
<dbReference type="EC" id="2.7.7.7"/>
<dbReference type="EC" id="3.1.26.13"/>
<dbReference type="EC" id="3.1.13.2"/>
<dbReference type="EC" id="2.7.7.-" evidence="5"/>
<dbReference type="EC" id="3.1.-.-" evidence="5"/>
<dbReference type="EMBL" id="M17449">
    <property type="status" value="NOT_ANNOTATED_CDS"/>
    <property type="molecule type" value="Genomic_RNA"/>
</dbReference>
<dbReference type="PDB" id="1AAF">
    <property type="method" value="NMR"/>
    <property type="chains" value="A=381-435"/>
</dbReference>
<dbReference type="PDBsum" id="1AAF"/>
<dbReference type="SMR" id="P05961"/>
<dbReference type="iPTMnet" id="P05961"/>
<dbReference type="EvolutionaryTrace" id="P05961"/>
<dbReference type="PRO" id="PR:P05961"/>
<dbReference type="Proteomes" id="UP000007697">
    <property type="component" value="Genome"/>
</dbReference>
<dbReference type="GO" id="GO:0043657">
    <property type="term" value="C:host cell"/>
    <property type="evidence" value="ECO:0007669"/>
    <property type="project" value="GOC"/>
</dbReference>
<dbReference type="GO" id="GO:0042025">
    <property type="term" value="C:host cell nucleus"/>
    <property type="evidence" value="ECO:0007669"/>
    <property type="project" value="UniProtKB-SubCell"/>
</dbReference>
<dbReference type="GO" id="GO:0020002">
    <property type="term" value="C:host cell plasma membrane"/>
    <property type="evidence" value="ECO:0007669"/>
    <property type="project" value="UniProtKB-SubCell"/>
</dbReference>
<dbReference type="GO" id="GO:0072494">
    <property type="term" value="C:host multivesicular body"/>
    <property type="evidence" value="ECO:0007669"/>
    <property type="project" value="UniProtKB-SubCell"/>
</dbReference>
<dbReference type="GO" id="GO:0016020">
    <property type="term" value="C:membrane"/>
    <property type="evidence" value="ECO:0007669"/>
    <property type="project" value="UniProtKB-KW"/>
</dbReference>
<dbReference type="GO" id="GO:0019013">
    <property type="term" value="C:viral nucleocapsid"/>
    <property type="evidence" value="ECO:0007669"/>
    <property type="project" value="UniProtKB-KW"/>
</dbReference>
<dbReference type="GO" id="GO:0055036">
    <property type="term" value="C:virion membrane"/>
    <property type="evidence" value="ECO:0007669"/>
    <property type="project" value="UniProtKB-SubCell"/>
</dbReference>
<dbReference type="GO" id="GO:0004190">
    <property type="term" value="F:aspartic-type endopeptidase activity"/>
    <property type="evidence" value="ECO:0007669"/>
    <property type="project" value="UniProtKB-KW"/>
</dbReference>
<dbReference type="GO" id="GO:0003677">
    <property type="term" value="F:DNA binding"/>
    <property type="evidence" value="ECO:0007669"/>
    <property type="project" value="UniProtKB-KW"/>
</dbReference>
<dbReference type="GO" id="GO:0003887">
    <property type="term" value="F:DNA-directed DNA polymerase activity"/>
    <property type="evidence" value="ECO:0007669"/>
    <property type="project" value="UniProtKB-KW"/>
</dbReference>
<dbReference type="GO" id="GO:0004533">
    <property type="term" value="F:exoribonuclease H activity"/>
    <property type="evidence" value="ECO:0007669"/>
    <property type="project" value="UniProtKB-EC"/>
</dbReference>
<dbReference type="GO" id="GO:0008289">
    <property type="term" value="F:lipid binding"/>
    <property type="evidence" value="ECO:0007669"/>
    <property type="project" value="UniProtKB-KW"/>
</dbReference>
<dbReference type="GO" id="GO:0035613">
    <property type="term" value="F:RNA stem-loop binding"/>
    <property type="evidence" value="ECO:0007669"/>
    <property type="project" value="TreeGrafter"/>
</dbReference>
<dbReference type="GO" id="GO:0003964">
    <property type="term" value="F:RNA-directed DNA polymerase activity"/>
    <property type="evidence" value="ECO:0007669"/>
    <property type="project" value="UniProtKB-KW"/>
</dbReference>
<dbReference type="GO" id="GO:0004523">
    <property type="term" value="F:RNA-DNA hybrid ribonuclease activity"/>
    <property type="evidence" value="ECO:0007669"/>
    <property type="project" value="InterPro"/>
</dbReference>
<dbReference type="GO" id="GO:0005198">
    <property type="term" value="F:structural molecule activity"/>
    <property type="evidence" value="ECO:0007669"/>
    <property type="project" value="InterPro"/>
</dbReference>
<dbReference type="GO" id="GO:0008270">
    <property type="term" value="F:zinc ion binding"/>
    <property type="evidence" value="ECO:0007669"/>
    <property type="project" value="UniProtKB-KW"/>
</dbReference>
<dbReference type="GO" id="GO:0015074">
    <property type="term" value="P:DNA integration"/>
    <property type="evidence" value="ECO:0007669"/>
    <property type="project" value="UniProtKB-KW"/>
</dbReference>
<dbReference type="GO" id="GO:0006310">
    <property type="term" value="P:DNA recombination"/>
    <property type="evidence" value="ECO:0007669"/>
    <property type="project" value="UniProtKB-KW"/>
</dbReference>
<dbReference type="GO" id="GO:0075713">
    <property type="term" value="P:establishment of integrated proviral latency"/>
    <property type="evidence" value="ECO:0007669"/>
    <property type="project" value="UniProtKB-KW"/>
</dbReference>
<dbReference type="GO" id="GO:0006508">
    <property type="term" value="P:proteolysis"/>
    <property type="evidence" value="ECO:0007669"/>
    <property type="project" value="UniProtKB-KW"/>
</dbReference>
<dbReference type="GO" id="GO:0046718">
    <property type="term" value="P:symbiont entry into host cell"/>
    <property type="evidence" value="ECO:0007669"/>
    <property type="project" value="UniProtKB-KW"/>
</dbReference>
<dbReference type="GO" id="GO:0052151">
    <property type="term" value="P:symbiont-mediated activation of host apoptosis"/>
    <property type="evidence" value="ECO:0007669"/>
    <property type="project" value="UniProtKB-KW"/>
</dbReference>
<dbReference type="GO" id="GO:0039657">
    <property type="term" value="P:symbiont-mediated suppression of host gene expression"/>
    <property type="evidence" value="ECO:0007669"/>
    <property type="project" value="UniProtKB-KW"/>
</dbReference>
<dbReference type="GO" id="GO:0044826">
    <property type="term" value="P:viral genome integration into host DNA"/>
    <property type="evidence" value="ECO:0007669"/>
    <property type="project" value="UniProtKB-KW"/>
</dbReference>
<dbReference type="GO" id="GO:0075732">
    <property type="term" value="P:viral penetration into host nucleus"/>
    <property type="evidence" value="ECO:0007669"/>
    <property type="project" value="UniProtKB-KW"/>
</dbReference>
<dbReference type="GO" id="GO:0075523">
    <property type="term" value="P:viral translational frameshifting"/>
    <property type="evidence" value="ECO:0007669"/>
    <property type="project" value="UniProtKB-KW"/>
</dbReference>
<dbReference type="CDD" id="cd05482">
    <property type="entry name" value="HIV_retropepsin_like"/>
    <property type="match status" value="1"/>
</dbReference>
<dbReference type="CDD" id="cd01645">
    <property type="entry name" value="RT_Rtv"/>
    <property type="match status" value="1"/>
</dbReference>
<dbReference type="FunFam" id="1.10.150.90:FF:000001">
    <property type="entry name" value="Gag polyprotein"/>
    <property type="match status" value="1"/>
</dbReference>
<dbReference type="FunFam" id="1.10.375.10:FF:000001">
    <property type="entry name" value="Gag polyprotein"/>
    <property type="match status" value="1"/>
</dbReference>
<dbReference type="FunFam" id="1.20.5.760:FF:000001">
    <property type="entry name" value="Gag polyprotein"/>
    <property type="match status" value="1"/>
</dbReference>
<dbReference type="FunFam" id="4.10.60.10:FF:000001">
    <property type="entry name" value="Gag polyprotein"/>
    <property type="match status" value="1"/>
</dbReference>
<dbReference type="FunFam" id="2.40.70.10:FF:000001">
    <property type="entry name" value="Gag-Pol polyprotein"/>
    <property type="match status" value="1"/>
</dbReference>
<dbReference type="FunFam" id="3.30.420.10:FF:000025">
    <property type="entry name" value="Gag-Pol polyprotein"/>
    <property type="match status" value="1"/>
</dbReference>
<dbReference type="FunFam" id="2.30.30.10:FF:000001">
    <property type="entry name" value="POL polyprotein"/>
    <property type="match status" value="1"/>
</dbReference>
<dbReference type="FunFam" id="3.30.420.10:FF:000017">
    <property type="entry name" value="POL polyprotein"/>
    <property type="match status" value="1"/>
</dbReference>
<dbReference type="FunFam" id="3.30.70.270:FF:000016">
    <property type="entry name" value="POL polyprotein"/>
    <property type="match status" value="1"/>
</dbReference>
<dbReference type="Gene3D" id="1.10.10.200">
    <property type="match status" value="1"/>
</dbReference>
<dbReference type="Gene3D" id="1.10.1200.30">
    <property type="match status" value="1"/>
</dbReference>
<dbReference type="Gene3D" id="3.30.70.270">
    <property type="match status" value="3"/>
</dbReference>
<dbReference type="Gene3D" id="2.40.70.10">
    <property type="entry name" value="Acid Proteases"/>
    <property type="match status" value="1"/>
</dbReference>
<dbReference type="Gene3D" id="3.10.10.10">
    <property type="entry name" value="HIV Type 1 Reverse Transcriptase, subunit A, domain 1"/>
    <property type="match status" value="1"/>
</dbReference>
<dbReference type="Gene3D" id="1.10.375.10">
    <property type="entry name" value="Human Immunodeficiency Virus Type 1 Capsid Protein"/>
    <property type="match status" value="1"/>
</dbReference>
<dbReference type="Gene3D" id="1.10.150.90">
    <property type="entry name" value="Immunodeficiency lentiviruses, gag gene matrix protein p17"/>
    <property type="match status" value="1"/>
</dbReference>
<dbReference type="Gene3D" id="2.30.30.10">
    <property type="entry name" value="Integrase, C-terminal domain superfamily, retroviral"/>
    <property type="match status" value="1"/>
</dbReference>
<dbReference type="Gene3D" id="3.30.420.10">
    <property type="entry name" value="Ribonuclease H-like superfamily/Ribonuclease H"/>
    <property type="match status" value="2"/>
</dbReference>
<dbReference type="Gene3D" id="1.20.5.760">
    <property type="entry name" value="Single helix bin"/>
    <property type="match status" value="1"/>
</dbReference>
<dbReference type="Gene3D" id="4.10.60.10">
    <property type="entry name" value="Zinc finger, CCHC-type"/>
    <property type="match status" value="1"/>
</dbReference>
<dbReference type="InterPro" id="IPR001969">
    <property type="entry name" value="Aspartic_peptidase_AS"/>
</dbReference>
<dbReference type="InterPro" id="IPR043502">
    <property type="entry name" value="DNA/RNA_pol_sf"/>
</dbReference>
<dbReference type="InterPro" id="IPR045345">
    <property type="entry name" value="Gag_p24_C"/>
</dbReference>
<dbReference type="InterPro" id="IPR017856">
    <property type="entry name" value="Integrase-like_N"/>
</dbReference>
<dbReference type="InterPro" id="IPR036862">
    <property type="entry name" value="Integrase_C_dom_sf_retrovir"/>
</dbReference>
<dbReference type="InterPro" id="IPR001037">
    <property type="entry name" value="Integrase_C_retrovir"/>
</dbReference>
<dbReference type="InterPro" id="IPR001584">
    <property type="entry name" value="Integrase_cat-core"/>
</dbReference>
<dbReference type="InterPro" id="IPR003308">
    <property type="entry name" value="Integrase_Zn-bd_dom_N"/>
</dbReference>
<dbReference type="InterPro" id="IPR000071">
    <property type="entry name" value="Lentvrl_matrix_N"/>
</dbReference>
<dbReference type="InterPro" id="IPR012344">
    <property type="entry name" value="Matrix_HIV/RSV_N"/>
</dbReference>
<dbReference type="InterPro" id="IPR001995">
    <property type="entry name" value="Peptidase_A2_cat"/>
</dbReference>
<dbReference type="InterPro" id="IPR021109">
    <property type="entry name" value="Peptidase_aspartic_dom_sf"/>
</dbReference>
<dbReference type="InterPro" id="IPR034170">
    <property type="entry name" value="Retropepsin-like_cat_dom"/>
</dbReference>
<dbReference type="InterPro" id="IPR018061">
    <property type="entry name" value="Retropepsins"/>
</dbReference>
<dbReference type="InterPro" id="IPR008916">
    <property type="entry name" value="Retrov_capsid_C"/>
</dbReference>
<dbReference type="InterPro" id="IPR008919">
    <property type="entry name" value="Retrov_capsid_N"/>
</dbReference>
<dbReference type="InterPro" id="IPR010999">
    <property type="entry name" value="Retrovr_matrix"/>
</dbReference>
<dbReference type="InterPro" id="IPR043128">
    <property type="entry name" value="Rev_trsase/Diguanyl_cyclase"/>
</dbReference>
<dbReference type="InterPro" id="IPR012337">
    <property type="entry name" value="RNaseH-like_sf"/>
</dbReference>
<dbReference type="InterPro" id="IPR002156">
    <property type="entry name" value="RNaseH_domain"/>
</dbReference>
<dbReference type="InterPro" id="IPR036397">
    <property type="entry name" value="RNaseH_sf"/>
</dbReference>
<dbReference type="InterPro" id="IPR000477">
    <property type="entry name" value="RT_dom"/>
</dbReference>
<dbReference type="InterPro" id="IPR010659">
    <property type="entry name" value="RVT_connect"/>
</dbReference>
<dbReference type="InterPro" id="IPR010661">
    <property type="entry name" value="RVT_thumb"/>
</dbReference>
<dbReference type="InterPro" id="IPR001878">
    <property type="entry name" value="Znf_CCHC"/>
</dbReference>
<dbReference type="InterPro" id="IPR036875">
    <property type="entry name" value="Znf_CCHC_sf"/>
</dbReference>
<dbReference type="PANTHER" id="PTHR41694">
    <property type="entry name" value="ENDOGENOUS RETROVIRUS GROUP K MEMBER POL PROTEIN"/>
    <property type="match status" value="1"/>
</dbReference>
<dbReference type="PANTHER" id="PTHR41694:SF3">
    <property type="entry name" value="RNA-DIRECTED DNA POLYMERASE-RELATED"/>
    <property type="match status" value="1"/>
</dbReference>
<dbReference type="Pfam" id="PF00540">
    <property type="entry name" value="Gag_p17"/>
    <property type="match status" value="1"/>
</dbReference>
<dbReference type="Pfam" id="PF19317">
    <property type="entry name" value="Gag_p24_C"/>
    <property type="match status" value="1"/>
</dbReference>
<dbReference type="Pfam" id="PF00552">
    <property type="entry name" value="IN_DBD_C"/>
    <property type="match status" value="1"/>
</dbReference>
<dbReference type="Pfam" id="PF02022">
    <property type="entry name" value="Integrase_Zn"/>
    <property type="match status" value="1"/>
</dbReference>
<dbReference type="Pfam" id="PF00075">
    <property type="entry name" value="RNase_H"/>
    <property type="match status" value="1"/>
</dbReference>
<dbReference type="Pfam" id="PF00665">
    <property type="entry name" value="rve"/>
    <property type="match status" value="1"/>
</dbReference>
<dbReference type="Pfam" id="PF00077">
    <property type="entry name" value="RVP"/>
    <property type="match status" value="1"/>
</dbReference>
<dbReference type="Pfam" id="PF00078">
    <property type="entry name" value="RVT_1"/>
    <property type="match status" value="1"/>
</dbReference>
<dbReference type="Pfam" id="PF06815">
    <property type="entry name" value="RVT_connect"/>
    <property type="match status" value="1"/>
</dbReference>
<dbReference type="Pfam" id="PF06817">
    <property type="entry name" value="RVT_thumb"/>
    <property type="match status" value="1"/>
</dbReference>
<dbReference type="Pfam" id="PF00098">
    <property type="entry name" value="zf-CCHC"/>
    <property type="match status" value="2"/>
</dbReference>
<dbReference type="PRINTS" id="PR00234">
    <property type="entry name" value="HIV1MATRIX"/>
</dbReference>
<dbReference type="SMART" id="SM00343">
    <property type="entry name" value="ZnF_C2HC"/>
    <property type="match status" value="2"/>
</dbReference>
<dbReference type="SUPFAM" id="SSF50630">
    <property type="entry name" value="Acid proteases"/>
    <property type="match status" value="1"/>
</dbReference>
<dbReference type="SUPFAM" id="SSF50122">
    <property type="entry name" value="DNA-binding domain of retroviral integrase"/>
    <property type="match status" value="1"/>
</dbReference>
<dbReference type="SUPFAM" id="SSF56672">
    <property type="entry name" value="DNA/RNA polymerases"/>
    <property type="match status" value="1"/>
</dbReference>
<dbReference type="SUPFAM" id="SSF46919">
    <property type="entry name" value="N-terminal Zn binding domain of HIV integrase"/>
    <property type="match status" value="1"/>
</dbReference>
<dbReference type="SUPFAM" id="SSF47836">
    <property type="entry name" value="Retroviral matrix proteins"/>
    <property type="match status" value="1"/>
</dbReference>
<dbReference type="SUPFAM" id="SSF47353">
    <property type="entry name" value="Retrovirus capsid dimerization domain-like"/>
    <property type="match status" value="1"/>
</dbReference>
<dbReference type="SUPFAM" id="SSF47943">
    <property type="entry name" value="Retrovirus capsid protein, N-terminal core domain"/>
    <property type="match status" value="1"/>
</dbReference>
<dbReference type="SUPFAM" id="SSF57756">
    <property type="entry name" value="Retrovirus zinc finger-like domains"/>
    <property type="match status" value="1"/>
</dbReference>
<dbReference type="SUPFAM" id="SSF53098">
    <property type="entry name" value="Ribonuclease H-like"/>
    <property type="match status" value="2"/>
</dbReference>
<dbReference type="PROSITE" id="PS50175">
    <property type="entry name" value="ASP_PROT_RETROV"/>
    <property type="match status" value="1"/>
</dbReference>
<dbReference type="PROSITE" id="PS00141">
    <property type="entry name" value="ASP_PROTEASE"/>
    <property type="match status" value="1"/>
</dbReference>
<dbReference type="PROSITE" id="PS50994">
    <property type="entry name" value="INTEGRASE"/>
    <property type="match status" value="1"/>
</dbReference>
<dbReference type="PROSITE" id="PS51027">
    <property type="entry name" value="INTEGRASE_DBD"/>
    <property type="match status" value="1"/>
</dbReference>
<dbReference type="PROSITE" id="PS50879">
    <property type="entry name" value="RNASE_H_1"/>
    <property type="match status" value="1"/>
</dbReference>
<dbReference type="PROSITE" id="PS50878">
    <property type="entry name" value="RT_POL"/>
    <property type="match status" value="1"/>
</dbReference>
<dbReference type="PROSITE" id="PS50158">
    <property type="entry name" value="ZF_CCHC"/>
    <property type="match status" value="2"/>
</dbReference>
<dbReference type="PROSITE" id="PS50876">
    <property type="entry name" value="ZF_INTEGRASE"/>
    <property type="match status" value="1"/>
</dbReference>
<organism>
    <name type="scientific">Human immunodeficiency virus type 1 group M subtype B (isolate MN)</name>
    <name type="common">HIV-1</name>
    <dbReference type="NCBI Taxonomy" id="11696"/>
    <lineage>
        <taxon>Viruses</taxon>
        <taxon>Riboviria</taxon>
        <taxon>Pararnavirae</taxon>
        <taxon>Artverviricota</taxon>
        <taxon>Revtraviricetes</taxon>
        <taxon>Ortervirales</taxon>
        <taxon>Retroviridae</taxon>
        <taxon>Orthoretrovirinae</taxon>
        <taxon>Lentivirus</taxon>
        <taxon>Human immunodeficiency virus type 1</taxon>
    </lineage>
</organism>
<gene>
    <name type="primary">gag-pol</name>
</gene>
<accession>P05961</accession>
<sequence>MGARASVLSGGELDRWENIRLRPGGKKKYKLKHVVWASRELERFAVNPGLLETSEGCRQILGQLQPSLQTGSEELKSLYNTVATLYCVHQKIEIKDTKEALEKIEEEQNKSKKKAQQAAADTGNRGNSSQVSQNYPIVQNIEGQMVHQAISPRTLNAWVKVVEEKAFSPEVIPMFSALSEGATPQDLNTMLNTVGGHQAAMQMLKETINEEAAEWDRLHPVHAGPITPGQMREPRGSDIAGTTSTLQEQIGWMTNNPPIPVGEIYKRWIILGLNKIVRMYSPSSILDIRQGPKEPFRDYVDRFYKTLRAEQASQEVKNRTTETLLVQNANPDCKTILKALGPAATLEEMMTACQGVGGPGHKARVLAEAMSQVTNSATIMMQRGNFRNQRKIIKCFNCGKEGHIAKNCRAPRKRGCWKCGKEGHQMKDCTERQANFLREDLAFLQGKAEFSSEQNRANSPTRRELQVWGRDNNSLSEAGEEAGDDRQGPVSFSFPQITLWQRPIVTIKIGGQLKEALLDTGADDTVLGEMNLPRRWKPKMIGGIGGFIKVRQYDQITIGICGHKAIGTVLVGPTPVNIIGRNLLTQLGCTLNFPISPIETVPVKLKPGMDGPKVKQWPLTEEKIKALIEICTEMEKEGKISKIGPENPYNTPVFAIKKKDSTKWRKLVDFRELNKKTQDFWEVQLGIPHPAGLKKKKSVTVLDVGDAYFSVPLDKDFRKYTAFTIPSINNETPGIRYQYNVLPQGWKGSPAIFQSSMTKILEPFRKQNPDIVIYQYMDDLYVGSDLEIGQHRAKIEELRRHLLRWGFTTPDKKHQKEPPFLWMGYELHPDKWTVQPIVLPEKDSWTVNDIQKLVGKLNWASQIYAGIKVKQLCKLLRGTKALTEVIPLTEEAELELAENREILKEPVHGVYYDPSKDLIAEVQKQGQGQWTYQIYQEPFKNLKTGKYARMRGAHTNDVKQLTEAVQKIATESIVIWGKTPKFRLPIQKETWETWWTEYTXATWIPEWEVVNTPPLVKLWYQLEKEPIVGAETFYVDGAANRETKKGKAGYVTNRGRQKVVSLTDTTNQKTELQAIHLALQDSGLEVNIVTDSQYALGIIQAQPDKSESELVSQIIEQLIKKEKVYLAWVPAHKGIGGNEQVDKLVSAGIRKVLFLDGIDKAQEDHEKYHSNWRAMASDFNLPPIVAKEIVASCDKCQLKGEAMHGQVDCSPGIWQLDCTHLEGKVILVAVHVASGYIEAEVIPAETGQETAYFLLKLAGRWPVKTIHTDNGPNFTSTTVKAACWWTGIKQEFGIPYNPQSQGVIESMNKELKKIIGQVRDQAEHLKRAVQMAVFIHNFKRKGGIGGYSAGERIVGIIATDIQTKELQKQITKIQNFRVYYRDSRDPLWKGPAKLLWKGEGAVVIQDNNDIKVVPRRKAKVIRDYGKQTAGDDCVASRQDED</sequence>
<comment type="function">
    <molecule>Gag-Pol polyprotein</molecule>
    <text evidence="1">Mediates, with Gag polyprotein, the essential events in virion assembly, including binding the plasma membrane, making the protein-protein interactions necessary to create spherical particles, recruiting the viral Env proteins, and packaging the genomic RNA via direct interactions with the RNA packaging sequence (Psi). Gag-Pol polyprotein may regulate its own translation, by the binding genomic RNA in the 5'-UTR. At low concentration, the polyprotein would promote translation, whereas at high concentration, the polyprotein would encapsidate genomic RNA and then shut off translation.</text>
</comment>
<comment type="function">
    <molecule>Matrix protein p17</molecule>
    <text evidence="7">Targets the polyprotein to the plasma membrane via a multipartite membrane-binding signal, that includes its myristoylated N-terminus. Matrix protein is part of the pre-integration complex. Implicated in the release from host cell mediated by Vpu. Binds to RNA.</text>
</comment>
<comment type="function">
    <molecule>Capsid protein p24</molecule>
    <text evidence="5 7">Forms the conical core that encapsulates the genomic RNA-nucleocapsid complex in the virion. Most core are conical, with only 7% tubular. The core is constituted by capsid protein hexamer subunits. The core is disassembled soon after virion entry (By similarity). Host restriction factors such as TRIM5-alpha or TRIMCyp bind retroviral capsids and cause premature capsid disassembly, leading to blocks in reverse transcription. Capsid restriction by TRIM5 is one of the factors which restricts HIV-1 to the human species. Host PIN1 apparently facilitates the virion uncoating. On the other hand, interactions with PDZD8 or CYPA stabilize the capsid.</text>
</comment>
<comment type="function">
    <molecule>Nucleocapsid protein p7</molecule>
    <text evidence="5">Encapsulates and protects viral dimeric unspliced genomic RNA (gRNA). Binds these RNAs through its zinc fingers. Acts as a nucleic acid chaperone which is involved in rearangement of nucleic acid secondary structure during gRNA retrotranscription. Also facilitates template switch leading to recombination. As part of the polyprotein, participates in gRNA dimerization, packaging, tRNA incorporation and virion assembly.</text>
</comment>
<comment type="function">
    <molecule>Protease</molecule>
    <text evidence="5 10">Aspartyl protease that mediates proteolytic cleavages of Gag and Gag-Pol polyproteins during or shortly after the release of the virion from the plasma membrane. Cleavages take place as an ordered, step-wise cascade to yield mature proteins. This process is called maturation. Displays maximal activity during the budding process just prior to particle release from the cell. Also cleaves Nef and Vif, probably concomitantly with viral structural proteins on maturation of virus particles. Hydrolyzes host EIF4GI and PABP1 in order to shut off the capped cellular mRNA translation. The resulting inhibition of cellular protein synthesis serves to ensure maximal viral gene expression and to evade host immune response. Also mediates cleavage of host YTHDF3. Mediates cleavage of host CARD8, thereby activating the CARD8 inflammasome, leading to the clearance of latent HIV-1 in patient CD4(+) T-cells after viral reactivation; in contrast, HIV-1 can evade CARD8-sensing when its protease remains inactive in infected cells prior to viral budding (By similarity).</text>
</comment>
<comment type="function">
    <molecule>Reverse transcriptase/ribonuclease H</molecule>
    <text evidence="5">Multifunctional enzyme that converts the viral RNA genome into dsDNA in the cytoplasm, shortly after virus entry into the cell. This enzyme displays a DNA polymerase activity that can copy either DNA or RNA templates, and a ribonuclease H (RNase H) activity that cleaves the RNA strand of RNA-DNA heteroduplexes in a partially processive 3' to 5' endonucleasic mode. Conversion of viral genomic RNA into dsDNA requires many steps. A tRNA(3)-Lys binds to the primer-binding site (PBS) situated at the 5'-end of the viral RNA. RT uses the 3' end of the tRNA primer to perform a short round of RNA-dependent minus-strand DNA synthesis. The reading proceeds through the U5 region and ends after the repeated (R) region which is present at both ends of viral RNA. The portion of the RNA-DNA heteroduplex is digested by the RNase H, resulting in a ssDNA product attached to the tRNA primer. This ssDNA/tRNA hybridizes with the identical R region situated at the 3' end of viral RNA. This template exchange, known as minus-strand DNA strong stop transfer, can be either intra- or intermolecular. RT uses the 3' end of this newly synthesized short ssDNA to perform the RNA-dependent minus-strand DNA synthesis of the whole template. RNase H digests the RNA template except for two polypurine tracts (PPTs) situated at the 5'-end and near the center of the genome. It is not clear if both polymerase and RNase H activities are simultaneous. RNase H probably can proceed both in a polymerase-dependent (RNA cut into small fragments by the same RT performing DNA synthesis) and a polymerase-independent mode (cleavage of remaining RNA fragments by free RTs). Secondly, RT performs DNA-directed plus-strand DNA synthesis using the PPTs that have not been removed by RNase H as primers. PPTs and tRNA primers are then removed by RNase H. The 3' and 5' ssDNA PBS regions hybridize to form a circular dsDNA intermediate. Strand displacement synthesis by RT to the PBS and PPT ends produces a blunt ended, linear dsDNA copy of the viral genome that includes long terminal repeats (LTRs) at both ends.</text>
</comment>
<comment type="function">
    <molecule>Integrase</molecule>
    <text evidence="5">Catalyzes viral DNA integration into the host chromosome, by performing a series of DNA cutting and joining reactions. This enzyme activity takes place after virion entry into a cell and reverse transcription of the RNA genome in dsDNA. The first step in the integration process is 3' processing. This step requires a complex comprising the viral genome, matrix protein, Vpr and integrase. This complex is called the pre-integration complex (PIC). The integrase protein removes 2 nucleotides from each 3' end of the viral DNA, leaving recessed CA OH's at the 3' ends. In the second step, the PIC enters cell nucleus. This process is mediated through integrase and Vpr proteins, and allows the virus to infect a non dividing cell. This ability to enter the nucleus is specific of lentiviruses, other retroviruses cannot and rely on cell division to access cell chromosomes. In the third step, termed strand transfer, the integrase protein joins the previously processed 3' ends to the 5' ends of strands of target cellular DNA at the site of integration. The 5'-ends are produced by integrase-catalyzed staggered cuts, 5 bp apart. A Y-shaped, gapped, recombination intermediate results, with the 5'-ends of the viral DNA strands and the 3' ends of target DNA strands remaining unjoined, flanking a gap of 5 bp. The last step is viral DNA integration into host chromosome. This involves host DNA repair synthesis in which the 5 bp gaps between the unjoined strands are filled in and then ligated. Since this process occurs at both cuts flanking the HIV genome, a 5 bp duplication of host DNA is produced at the ends of HIV-1 integration. Alternatively, Integrase may catalyze the excision of viral DNA just after strand transfer, this is termed disintegration.</text>
</comment>
<comment type="catalytic activity">
    <reaction evidence="10">
        <text>Specific for a P1 residue that is hydrophobic, and P1' variable, but often Pro.</text>
        <dbReference type="EC" id="3.4.23.16"/>
    </reaction>
</comment>
<comment type="catalytic activity">
    <reaction evidence="1">
        <text>Endohydrolysis of RNA in RNA/DNA hybrids. Three different cleavage modes: 1. sequence-specific internal cleavage of RNA. Human immunodeficiency virus type 1 and Moloney murine leukemia virus enzymes prefer to cleave the RNA strand one nucleotide away from the RNA-DNA junction. 2. RNA 5'-end directed cleavage 13-19 nucleotides from the RNA end. 3. DNA 3'-end directed cleavage 15-20 nucleotides away from the primer terminus.</text>
        <dbReference type="EC" id="3.1.26.13"/>
    </reaction>
</comment>
<comment type="catalytic activity">
    <reaction evidence="1">
        <text>3'-end directed exonucleolytic cleavage of viral RNA-DNA hybrid.</text>
        <dbReference type="EC" id="3.1.13.2"/>
    </reaction>
</comment>
<comment type="catalytic activity">
    <reaction evidence="11">
        <text>DNA(n) + a 2'-deoxyribonucleoside 5'-triphosphate = DNA(n+1) + diphosphate</text>
        <dbReference type="Rhea" id="RHEA:22508"/>
        <dbReference type="Rhea" id="RHEA-COMP:17339"/>
        <dbReference type="Rhea" id="RHEA-COMP:17340"/>
        <dbReference type="ChEBI" id="CHEBI:33019"/>
        <dbReference type="ChEBI" id="CHEBI:61560"/>
        <dbReference type="ChEBI" id="CHEBI:173112"/>
        <dbReference type="EC" id="2.7.7.49"/>
    </reaction>
</comment>
<comment type="catalytic activity">
    <reaction evidence="11">
        <text>DNA(n) + a 2'-deoxyribonucleoside 5'-triphosphate = DNA(n+1) + diphosphate</text>
        <dbReference type="Rhea" id="RHEA:22508"/>
        <dbReference type="Rhea" id="RHEA-COMP:17339"/>
        <dbReference type="Rhea" id="RHEA-COMP:17340"/>
        <dbReference type="ChEBI" id="CHEBI:33019"/>
        <dbReference type="ChEBI" id="CHEBI:61560"/>
        <dbReference type="ChEBI" id="CHEBI:173112"/>
        <dbReference type="EC" id="2.7.7.7"/>
    </reaction>
</comment>
<comment type="cofactor">
    <cofactor evidence="1">
        <name>Mg(2+)</name>
        <dbReference type="ChEBI" id="CHEBI:18420"/>
    </cofactor>
    <text evidence="1">Binds 2 magnesium ions for reverse transcriptase polymerase activity.</text>
</comment>
<comment type="cofactor">
    <cofactor evidence="1">
        <name>Mg(2+)</name>
        <dbReference type="ChEBI" id="CHEBI:18420"/>
    </cofactor>
    <text evidence="1">Binds 2 magnesium ions for ribonuclease H (RNase H) activity. Substrate-binding is a precondition for magnesium binding.</text>
</comment>
<comment type="cofactor">
    <cofactor evidence="1">
        <name>Mg(2+)</name>
        <dbReference type="ChEBI" id="CHEBI:18420"/>
    </cofactor>
    <text evidence="1">Magnesium ions are required for integrase activity. Binds at least 1, maybe 2 magnesium ions.</text>
</comment>
<comment type="activity regulation">
    <text evidence="1">Protease: The viral protease is inhibited by many synthetic protease inhibitors (PIs), such as amprenavir, atazanavir, indinavir, loprinavir, nelfinavir, ritonavir and saquinavir. Use of protease inhibitors in tritherapy regimens permit more ambitious therapeutic strategies. Reverse transcriptase/ribonuclease H: RT can be inhibited either by nucleoside RT inhibitors (NRTIs) or by non nucleoside RT inhibitors (NNRTIs). NRTIs act as chain terminators, whereas NNRTIs inhibit DNA polymerization by binding a small hydrophobic pocket near the RT active site and inducing an allosteric change in this region. Classical NRTIs are abacavir, adefovir (PMEA), didanosine (ddI), lamivudine (3TC), stavudine (d4T), tenofovir (PMPA), zalcitabine (ddC), and zidovudine (AZT). Classical NNRTIs are atevirdine (BHAP U-87201E), delavirdine, efavirenz (DMP-266), emivirine (I-EBU), and nevirapine (BI-RG-587). The tritherapies used as a basic effective treatment of AIDS associate two NRTIs and one NNRTI.</text>
</comment>
<comment type="subunit">
    <molecule>Matrix protein p17</molecule>
    <text evidence="5 7">Homotrimer; further assembles as hexamers of trimers (By similarity). Interacts with gp41 (via C-terminus) (By similarity). Interacts with host CALM1; this interaction induces a conformational change in the Matrix protein, triggering exposure of the myristate group (By similarity). Interacts with host AP3D1; this interaction allows the polyprotein trafficking to multivesicular bodies during virus assembly (By similarity). Part of the pre-integration complex (PIC) which is composed of viral genome, matrix protein, Vpr and integrase (By similarity).</text>
</comment>
<comment type="subunit">
    <molecule>Capsid protein p24</molecule>
    <text evidence="5 7">Homodimer; the homodimer further multimerizes as homohexamers or homopentamers. Interacts with human PPIA/CYPA (By similarity); This interaction stabilizes the capsid. Interacts with human NUP153 (By similarity). Interacts with host PDZD8; this interaction stabilizes the capsid (By similarity). Interacts with monkey TRIM5; this interaction destabilizes the capsid (By similarity).</text>
</comment>
<comment type="subunit">
    <molecule>Protease</molecule>
    <text evidence="5 7">Homodimer, whose active site consists of two apposed aspartic acid residues.</text>
</comment>
<comment type="subunit">
    <molecule>Reverse transcriptase/ribonuclease H</molecule>
    <text evidence="3">Heterodimer of p66 RT and p51 RT (RT p66/p51) (By similarity). Heterodimerization of RT is essential for DNA polymerase activity (By similarity). The overall folding of the subdomains is similar in p66 RT and p51 RT but the spatial arrangements of the subdomains are dramatically different (By similarity).</text>
</comment>
<comment type="subunit">
    <molecule>Integrase</molecule>
    <text evidence="4 5 7">Homotetramer; may further associate as a homohexadecamer (By similarity). Part of the pre-integration complex (PIC) which is composed of viral genome, matrix protein, Vpr and integrase. Interacts with human SMARCB1/INI1 and human PSIP1/LEDGF isoform 1. Interacts with human KPNA3; this interaction might play a role in nuclear import of the pre-integration complex (By similarity). Interacts with human NUP153; this interaction might play a role in nuclear import of the pre-integration complex (By similarity).</text>
</comment>
<comment type="subcellular location">
    <molecule>Gag-Pol polyprotein</molecule>
    <subcellularLocation>
        <location>Host cell membrane</location>
        <topology>Lipid-anchor</topology>
    </subcellularLocation>
    <subcellularLocation>
        <location>Host endosome</location>
        <location>Host multivesicular body</location>
    </subcellularLocation>
    <text evidence="7">These locations are linked to virus assembly sites. The main location is the cell membrane, but under some circumstances, late endosomal compartments can serve as productive sites for virion assembly.</text>
</comment>
<comment type="subcellular location">
    <molecule>Matrix protein p17</molecule>
    <subcellularLocation>
        <location>Virion membrane</location>
        <topology evidence="19">Lipid-anchor</topology>
    </subcellularLocation>
    <subcellularLocation>
        <location evidence="1">Host nucleus</location>
    </subcellularLocation>
    <subcellularLocation>
        <location evidence="1">Host cytoplasm</location>
    </subcellularLocation>
</comment>
<comment type="subcellular location">
    <molecule>Capsid protein p24</molecule>
    <subcellularLocation>
        <location evidence="19">Virion</location>
    </subcellularLocation>
</comment>
<comment type="subcellular location">
    <molecule>Nucleocapsid protein p7</molecule>
    <subcellularLocation>
        <location evidence="19">Virion</location>
    </subcellularLocation>
</comment>
<comment type="subcellular location">
    <molecule>Reverse transcriptase/ribonuclease H</molecule>
    <subcellularLocation>
        <location evidence="19">Virion</location>
    </subcellularLocation>
</comment>
<comment type="subcellular location">
    <molecule>Integrase</molecule>
    <subcellularLocation>
        <location evidence="19">Virion</location>
    </subcellularLocation>
    <subcellularLocation>
        <location evidence="19">Host nucleus</location>
    </subcellularLocation>
    <subcellularLocation>
        <location evidence="19">Host cytoplasm</location>
    </subcellularLocation>
    <text evidence="19">Nuclear at initial phase, cytoplasmic at assembly.</text>
</comment>
<comment type="alternative products">
    <event type="ribosomal frameshifting"/>
    <isoform>
        <id>P05961-1</id>
        <name>Gag-Pol polyprotein</name>
        <sequence type="displayed"/>
    </isoform>
    <isoform>
        <id>P05888-1</id>
        <name>Gag polyprotein</name>
        <sequence type="external"/>
    </isoform>
    <text>Translation results in the formation of the Gag polyprotein most of the time. Ribosomal frameshifting at the gag-pol genes boundary occurs at low frequency and produces the Gag-Pol polyprotein. This strategy of translation probably allows the virus to modulate the quantity of each viral protein. Maintenance of a correct Gag to Gag-Pol ratio is essential for RNA dimerization and viral infectivity.</text>
</comment>
<comment type="domain">
    <molecule>Reverse transcriptase/ribonuclease H</molecule>
    <text evidence="1">RT is structured in five subdomains: finger, palm, thumb, connection and RNase H. Within the palm subdomain, the 'primer grip' region is thought to be involved in the positioning of the primer terminus for accommodating the incoming nucleotide. The RNase H domain stabilizes the association of RT with primer-template.</text>
</comment>
<comment type="domain">
    <molecule>Reverse transcriptase/ribonuclease H</molecule>
    <text evidence="1">The tryptophan repeat motif is involved in RT p66/p51 dimerization (By similarity).</text>
</comment>
<comment type="domain">
    <molecule>Integrase</molecule>
    <text evidence="1">The core domain contains the D-x(n)-D-x(35)-E motif, named for the phylogenetically conserved glutamic acid and aspartic acid residues and the invariant 35 amino acid spacing between the second and third acidic residues. Each acidic residue of the D,D(35)E motif is independently essential for the 3'-processing and strand transfer activities of purified integrase protein.</text>
</comment>
<comment type="PTM">
    <molecule>Gag-Pol polyprotein</molecule>
    <text evidence="5 11">Specific enzymatic cleavages by the viral protease yield mature proteins. The protease is released by autocatalytic cleavage. The polyprotein is cleaved during and after budding, this process is termed maturation. Proteolytic cleavage of p66 RT removes the RNase H domain to yield the p51 RT subunit. Nucleocapsid protein p7 might be further cleaved after virus entry.</text>
</comment>
<comment type="PTM">
    <molecule>Matrix protein p17</molecule>
    <text evidence="5">Tyrosine phosphorylated presumably in the virion by a host kinase. Phosphorylation is apparently not a major regulator of membrane association.</text>
</comment>
<comment type="PTM">
    <molecule>Capsid protein p24</molecule>
    <text evidence="6">Phosphorylated possibly by host MAPK1; this phosphorylation is necessary for Pin1-mediated virion uncoating.</text>
</comment>
<comment type="PTM">
    <molecule>Nucleocapsid protein p7</molecule>
    <text evidence="2">Methylated by host PRMT6, impairing its function by reducing RNA annealing and the initiation of reverse transcription.</text>
</comment>
<comment type="miscellaneous">
    <molecule>Reverse transcriptase/ribonuclease H</molecule>
    <text evidence="1">Error-prone enzyme that lacks a proof-reading function. High mutations rate is a direct consequence of this characteristic. RT also displays frequent template switching leading to high recombination rate. Recombination mostly occurs between homologous regions of the two copackaged RNA genomes. If these two RNA molecules derive from different viral strains, reverse transcription will give rise to highly recombinated proviral DNAs.</text>
</comment>
<comment type="miscellaneous">
    <text>HIV-1 lineages are divided in three main groups, M (for Major), O (for Outlier), and N (for New, or Non-M, Non-O). The vast majority of strains found worldwide belong to the group M. Group O seems to be endemic to and largely confined to Cameroon and neighboring countries in West Central Africa, where these viruses represent a small minority of HIV-1 strains. The group N is represented by a limited number of isolates from Cameroonian persons. The group M is further subdivided in 9 clades or subtypes (A to D, F to H, J and K).</text>
</comment>
<comment type="miscellaneous">
    <text>Resistance to inhibitors associated with mutations are observed both in viral protease and in reverse transcriptase. Most of the time, single mutations confer only a modest reduction in drug susceptibility. Combination of several mutations is usually required to develop a high-level drug resistance. These mutations are predominantly found in clade B viruses and not in other genotypes. They are listed in the clade B representative isolate HXB2 (AC P04585).</text>
</comment>
<comment type="miscellaneous">
    <molecule>Isoform Gag-Pol polyprotein</molecule>
    <text>Produced by -1 ribosomal frameshifting.</text>
</comment>
<comment type="online information" name="HIV drug resistance mutations">
    <link uri="https://www.iasusa.org/hiv-drug-resistance/hiv-drug-resistance-mutations/"/>
</comment>
<comment type="online information" name="hivdb">
    <link uri="https://hivdb.stanford.edu"/>
    <text>HIV drug resistance database</text>
</comment>
<reference key="1">
    <citation type="journal article" date="1988" name="Virology">
        <title>Envelope sequences of two new United States HIV-1 isolates.</title>
        <authorList>
            <person name="Gurgo C."/>
            <person name="Guo H.-G."/>
            <person name="Franchini G."/>
            <person name="Aldovini A."/>
            <person name="Collalti E."/>
            <person name="Farrell K."/>
            <person name="Wong-Staal F."/>
            <person name="Gallo R.C."/>
            <person name="Reitz M.S. Jr."/>
        </authorList>
    </citation>
    <scope>NUCLEOTIDE SEQUENCE [GENOMIC RNA]</scope>
</reference>
<reference key="2">
    <citation type="journal article" date="1996" name="Curr. Top. Microbiol. Immunol.">
        <title>Proteolytic processing and particle maturation.</title>
        <authorList>
            <person name="Vogt V.M."/>
        </authorList>
    </citation>
    <scope>REVIEW</scope>
</reference>
<reference key="3">
    <citation type="journal article" date="1999" name="J. Mol. Biol.">
        <title>Structural biology of HIV.</title>
        <authorList>
            <person name="Turner B.G."/>
            <person name="Summers M.F."/>
        </authorList>
    </citation>
    <scope>REVIEW</scope>
    <scope>MYRISTOYLATION AT GLY-2</scope>
</reference>
<reference key="4">
    <citation type="journal article" date="2001" name="Annu. Rev. Genet.">
        <title>Mechanisms of retroviral recombination.</title>
        <authorList>
            <person name="Negroni M."/>
            <person name="Buc H."/>
        </authorList>
    </citation>
    <scope>REVIEW</scope>
</reference>
<reference key="5">
    <citation type="journal article" date="2002" name="Genome Biol.">
        <title>Retroviral proteases.</title>
        <authorList>
            <person name="Dunn B.M."/>
            <person name="Goodenow M.M."/>
            <person name="Gustchina A."/>
            <person name="Wlodawer A."/>
        </authorList>
    </citation>
    <scope>REVIEW</scope>
</reference>
<reference key="6">
    <citation type="journal article" date="2003" name="Biochim. Biophys. Acta">
        <title>Role of HIV-1 Gag domains in viral assembly.</title>
        <authorList>
            <person name="Scarlata S."/>
            <person name="Carter C."/>
        </authorList>
    </citation>
    <scope>REVIEW</scope>
</reference>
<reference key="7">
    <citation type="journal article" date="1992" name="Protein Sci.">
        <title>Nucleocapsid zinc fingers detected in retroviruses: EXAFS studies of intact viruses and the solution-state structure of the nucleocapsid protein from HIV-1.</title>
        <authorList>
            <person name="Summers M.F."/>
            <person name="Henderson L.E."/>
            <person name="Chance M.R."/>
            <person name="Bess J.W. Jr."/>
            <person name="South T.L."/>
            <person name="Blake P.R."/>
            <person name="Sagi I."/>
            <person name="Perez-Alvarado G."/>
            <person name="Sowder R.C. III"/>
            <person name="Hare D.R."/>
            <person name="Arthur L.O."/>
        </authorList>
    </citation>
    <scope>STRUCTURE BY NMR OF 381-435</scope>
</reference>
<keyword id="KW-0002">3D-structure</keyword>
<keyword id="KW-1073">Activation of host caspases by virus</keyword>
<keyword id="KW-0014">AIDS</keyword>
<keyword id="KW-0064">Aspartyl protease</keyword>
<keyword id="KW-0167">Capsid protein</keyword>
<keyword id="KW-0229">DNA integration</keyword>
<keyword id="KW-0233">DNA recombination</keyword>
<keyword id="KW-0238">DNA-binding</keyword>
<keyword id="KW-0239">DNA-directed DNA polymerase</keyword>
<keyword id="KW-0255">Endonuclease</keyword>
<keyword id="KW-1262">Eukaryotic host gene expression shutoff by virus</keyword>
<keyword id="KW-1193">Eukaryotic host translation shutoff by virus</keyword>
<keyword id="KW-1032">Host cell membrane</keyword>
<keyword id="KW-1035">Host cytoplasm</keyword>
<keyword id="KW-1039">Host endosome</keyword>
<keyword id="KW-1190">Host gene expression shutoff by virus</keyword>
<keyword id="KW-1043">Host membrane</keyword>
<keyword id="KW-1048">Host nucleus</keyword>
<keyword id="KW-0945">Host-virus interaction</keyword>
<keyword id="KW-0378">Hydrolase</keyword>
<keyword id="KW-0446">Lipid-binding</keyword>
<keyword id="KW-0449">Lipoprotein</keyword>
<keyword id="KW-0460">Magnesium</keyword>
<keyword id="KW-0472">Membrane</keyword>
<keyword id="KW-0479">Metal-binding</keyword>
<keyword id="KW-1119">Modulation of host cell apoptosis by virus</keyword>
<keyword id="KW-0511">Multifunctional enzyme</keyword>
<keyword id="KW-0519">Myristate</keyword>
<keyword id="KW-0540">Nuclease</keyword>
<keyword id="KW-0548">Nucleotidyltransferase</keyword>
<keyword id="KW-0597">Phosphoprotein</keyword>
<keyword id="KW-0645">Protease</keyword>
<keyword id="KW-1185">Reference proteome</keyword>
<keyword id="KW-0677">Repeat</keyword>
<keyword id="KW-0688">Ribosomal frameshifting</keyword>
<keyword id="KW-0694">RNA-binding</keyword>
<keyword id="KW-0695">RNA-directed DNA polymerase</keyword>
<keyword id="KW-0808">Transferase</keyword>
<keyword id="KW-1179">Viral genome integration</keyword>
<keyword id="KW-0543">Viral nucleoprotein</keyword>
<keyword id="KW-1163">Viral penetration into host nucleus</keyword>
<keyword id="KW-1188">Viral release from host cell</keyword>
<keyword id="KW-0946">Virion</keyword>
<keyword id="KW-0917">Virion maturation</keyword>
<keyword id="KW-1160">Virus entry into host cell</keyword>
<keyword id="KW-0862">Zinc</keyword>
<keyword id="KW-0863">Zinc-finger</keyword>
<name>POL_HV1MN</name>
<protein>
    <recommendedName>
        <fullName>Gag-Pol polyprotein</fullName>
    </recommendedName>
    <alternativeName>
        <fullName>Pr160Gag-Pol</fullName>
    </alternativeName>
    <component>
        <recommendedName>
            <fullName>Matrix protein p17</fullName>
            <shortName>MA</shortName>
        </recommendedName>
    </component>
    <component>
        <recommendedName>
            <fullName>Capsid protein p24</fullName>
            <shortName>CA</shortName>
        </recommendedName>
    </component>
    <component>
        <recommendedName>
            <fullName evidence="7">Spacer peptide 1</fullName>
            <shortName>SP1</shortName>
        </recommendedName>
        <alternativeName>
            <fullName>p2</fullName>
        </alternativeName>
    </component>
    <component>
        <recommendedName>
            <fullName>Nucleocapsid protein p7</fullName>
            <shortName>NC</shortName>
        </recommendedName>
    </component>
    <component>
        <recommendedName>
            <fullName>Transframe peptide</fullName>
            <shortName>TF</shortName>
        </recommendedName>
    </component>
    <component>
        <recommendedName>
            <fullName>p6-pol</fullName>
            <shortName>p6*</shortName>
        </recommendedName>
    </component>
    <component>
        <recommendedName>
            <fullName>Protease</fullName>
            <ecNumber>3.4.23.16</ecNumber>
        </recommendedName>
        <alternativeName>
            <fullName>PR</fullName>
        </alternativeName>
        <alternativeName>
            <fullName>Retropepsin</fullName>
        </alternativeName>
    </component>
    <component>
        <recommendedName>
            <fullName>Reverse transcriptase/ribonuclease H</fullName>
            <ecNumber>2.7.7.49</ecNumber>
            <ecNumber>2.7.7.7</ecNumber>
            <ecNumber>3.1.26.13</ecNumber>
        </recommendedName>
        <alternativeName>
            <fullName>Exoribonuclease H</fullName>
            <ecNumber>3.1.13.2</ecNumber>
        </alternativeName>
        <alternativeName>
            <fullName>p66 RT</fullName>
        </alternativeName>
    </component>
    <component>
        <recommendedName>
            <fullName>p51 RT</fullName>
        </recommendedName>
    </component>
    <component>
        <recommendedName>
            <fullName>p15</fullName>
        </recommendedName>
    </component>
    <component>
        <recommendedName>
            <fullName>Integrase</fullName>
            <shortName>IN</shortName>
            <ecNumber evidence="5">2.7.7.-</ecNumber>
            <ecNumber evidence="5">3.1.-.-</ecNumber>
        </recommendedName>
    </component>
</protein>
<organismHost>
    <name type="scientific">Homo sapiens</name>
    <name type="common">Human</name>
    <dbReference type="NCBI Taxonomy" id="9606"/>
</organismHost>
<proteinExistence type="evidence at protein level"/>
<feature type="initiator methionine" description="Removed; by host">
    <location>
        <position position="1"/>
    </location>
</feature>
<feature type="chain" id="PRO_0000261271" description="Gag-Pol polyprotein">
    <location>
        <begin position="2"/>
        <end position="1441"/>
    </location>
</feature>
<feature type="chain" id="PRO_0000042376" description="Matrix protein p17" evidence="1">
    <location>
        <begin position="2"/>
        <end position="135"/>
    </location>
</feature>
<feature type="chain" id="PRO_0000042377" description="Capsid protein p24" evidence="1">
    <location>
        <begin position="136"/>
        <end position="366"/>
    </location>
</feature>
<feature type="peptide" id="PRO_0000042378" description="Spacer peptide 1" evidence="1">
    <location>
        <begin position="367"/>
        <end position="380"/>
    </location>
</feature>
<feature type="chain" id="PRO_0000042379" description="Nucleocapsid protein p7" evidence="1">
    <location>
        <begin position="381"/>
        <end position="435"/>
    </location>
</feature>
<feature type="peptide" id="PRO_0000246720" description="Transframe peptide" evidence="8">
    <location>
        <begin position="436"/>
        <end position="443"/>
    </location>
</feature>
<feature type="chain" id="PRO_0000042380" description="p6-pol" evidence="8">
    <location>
        <begin position="444"/>
        <end position="494"/>
    </location>
</feature>
<feature type="chain" id="PRO_0000038658" description="Protease" evidence="1">
    <location>
        <begin position="495"/>
        <end position="593"/>
    </location>
</feature>
<feature type="chain" id="PRO_0000042381" description="Reverse transcriptase/ribonuclease H" evidence="1">
    <location>
        <begin position="594"/>
        <end position="1153"/>
    </location>
</feature>
<feature type="chain" id="PRO_0000042382" description="p51 RT" evidence="1">
    <location>
        <begin position="594"/>
        <end position="1033"/>
    </location>
</feature>
<feature type="chain" id="PRO_0000042383" description="p15" evidence="1">
    <location>
        <begin position="1034"/>
        <end position="1153"/>
    </location>
</feature>
<feature type="chain" id="PRO_0000042384" description="Integrase" evidence="1">
    <location>
        <begin position="1154"/>
        <end position="1441"/>
    </location>
</feature>
<feature type="domain" description="Peptidase A2" evidence="10">
    <location>
        <begin position="514"/>
        <end position="583"/>
    </location>
</feature>
<feature type="domain" description="Reverse transcriptase" evidence="11">
    <location>
        <begin position="637"/>
        <end position="827"/>
    </location>
</feature>
<feature type="domain" description="RNase H type-1" evidence="12">
    <location>
        <begin position="1027"/>
        <end position="1150"/>
    </location>
</feature>
<feature type="domain" description="Integrase catalytic" evidence="14">
    <location>
        <begin position="1207"/>
        <end position="1357"/>
    </location>
</feature>
<feature type="zinc finger region" description="CCHC-type 1" evidence="9">
    <location>
        <begin position="393"/>
        <end position="410"/>
    </location>
</feature>
<feature type="zinc finger region" description="CCHC-type 2" evidence="9">
    <location>
        <begin position="414"/>
        <end position="431"/>
    </location>
</feature>
<feature type="zinc finger region" description="Integrase-type" evidence="13">
    <location>
        <begin position="1156"/>
        <end position="1197"/>
    </location>
</feature>
<feature type="DNA-binding region" description="Integrase-type" evidence="15">
    <location>
        <begin position="1376"/>
        <end position="1423"/>
    </location>
</feature>
<feature type="region of interest" description="Interaction with Gp41" evidence="7">
    <location>
        <begin position="7"/>
        <end position="31"/>
    </location>
</feature>
<feature type="region of interest" description="Interaction with host CALM1" evidence="5">
    <location>
        <begin position="8"/>
        <end position="43"/>
    </location>
</feature>
<feature type="region of interest" description="Interaction with host AP3D1" evidence="7">
    <location>
        <begin position="12"/>
        <end position="19"/>
    </location>
</feature>
<feature type="region of interest" description="Interaction with membrane phosphatidylinositol 4,5-bisphosphate and RNA" evidence="7">
    <location>
        <begin position="14"/>
        <end position="33"/>
    </location>
</feature>
<feature type="region of interest" description="Interaction with membrane phosphatidylinositol 4,5-bisphosphate" evidence="7">
    <location>
        <begin position="73"/>
        <end position="77"/>
    </location>
</feature>
<feature type="region of interest" description="Disordered" evidence="17">
    <location>
        <begin position="106"/>
        <end position="131"/>
    </location>
</feature>
<feature type="region of interest" description="Interaction with human PPIA/CYPA and NUP153" evidence="7">
    <location>
        <begin position="192"/>
        <end position="230"/>
    </location>
</feature>
<feature type="region of interest" description="Dimerization/Multimerization of capsid protein p24" evidence="5">
    <location>
        <begin position="280"/>
        <end position="366"/>
    </location>
</feature>
<feature type="region of interest" description="Disordered" evidence="17">
    <location>
        <begin position="451"/>
        <end position="489"/>
    </location>
</feature>
<feature type="region of interest" description="Dimerization of protease" evidence="5">
    <location>
        <begin position="495"/>
        <end position="499"/>
    </location>
</feature>
<feature type="region of interest" description="Dimerization of protease" evidence="5">
    <location>
        <begin position="543"/>
        <end position="549"/>
    </location>
</feature>
<feature type="region of interest" description="Dimerization of protease" evidence="5">
    <location>
        <begin position="582"/>
        <end position="594"/>
    </location>
</feature>
<feature type="region of interest" description="RT 'primer grip'" evidence="1">
    <location>
        <begin position="820"/>
        <end position="828"/>
    </location>
</feature>
<feature type="short sequence motif" description="Nuclear export signal" evidence="1">
    <location>
        <begin position="16"/>
        <end position="22"/>
    </location>
</feature>
<feature type="short sequence motif" description="Nuclear localization signal" evidence="1">
    <location>
        <begin position="26"/>
        <end position="32"/>
    </location>
</feature>
<feature type="short sequence motif" description="Tryptophan repeat motif" evidence="1">
    <location>
        <begin position="991"/>
        <end position="1007"/>
    </location>
</feature>
<feature type="compositionally biased region" description="Polar residues" evidence="17">
    <location>
        <begin position="451"/>
        <end position="460"/>
    </location>
</feature>
<feature type="active site" description="For protease activity; shared with dimeric partner" evidence="16">
    <location>
        <position position="519"/>
    </location>
</feature>
<feature type="binding site" evidence="1">
    <location>
        <position position="703"/>
    </location>
    <ligand>
        <name>Mg(2+)</name>
        <dbReference type="ChEBI" id="CHEBI:18420"/>
        <label>1</label>
        <note>catalytic; for reverse transcriptase activity</note>
    </ligand>
</feature>
<feature type="binding site" evidence="1">
    <location>
        <position position="778"/>
    </location>
    <ligand>
        <name>Mg(2+)</name>
        <dbReference type="ChEBI" id="CHEBI:18420"/>
        <label>1</label>
        <note>catalytic; for reverse transcriptase activity</note>
    </ligand>
</feature>
<feature type="binding site" evidence="1">
    <location>
        <position position="779"/>
    </location>
    <ligand>
        <name>Mg(2+)</name>
        <dbReference type="ChEBI" id="CHEBI:18420"/>
        <label>1</label>
        <note>catalytic; for reverse transcriptase activity</note>
    </ligand>
</feature>
<feature type="binding site" evidence="1">
    <location>
        <position position="1036"/>
    </location>
    <ligand>
        <name>Mg(2+)</name>
        <dbReference type="ChEBI" id="CHEBI:18420"/>
        <label>2</label>
        <note>catalytic; for RNase H activity</note>
    </ligand>
</feature>
<feature type="binding site" evidence="1">
    <location>
        <position position="1071"/>
    </location>
    <ligand>
        <name>Mg(2+)</name>
        <dbReference type="ChEBI" id="CHEBI:18420"/>
        <label>2</label>
        <note>catalytic; for RNase H activity</note>
    </ligand>
</feature>
<feature type="binding site" evidence="1">
    <location>
        <position position="1091"/>
    </location>
    <ligand>
        <name>Mg(2+)</name>
        <dbReference type="ChEBI" id="CHEBI:18420"/>
        <label>2</label>
        <note>catalytic; for RNase H activity</note>
    </ligand>
</feature>
<feature type="binding site" evidence="1">
    <location>
        <position position="1142"/>
    </location>
    <ligand>
        <name>Mg(2+)</name>
        <dbReference type="ChEBI" id="CHEBI:18420"/>
        <label>2</label>
        <note>catalytic; for RNase H activity</note>
    </ligand>
</feature>
<feature type="binding site" evidence="13">
    <location>
        <position position="1165"/>
    </location>
    <ligand>
        <name>Zn(2+)</name>
        <dbReference type="ChEBI" id="CHEBI:29105"/>
    </ligand>
</feature>
<feature type="binding site" evidence="13">
    <location>
        <position position="1169"/>
    </location>
    <ligand>
        <name>Zn(2+)</name>
        <dbReference type="ChEBI" id="CHEBI:29105"/>
    </ligand>
</feature>
<feature type="binding site" evidence="13">
    <location>
        <position position="1193"/>
    </location>
    <ligand>
        <name>Zn(2+)</name>
        <dbReference type="ChEBI" id="CHEBI:29105"/>
    </ligand>
</feature>
<feature type="binding site" evidence="13">
    <location>
        <position position="1196"/>
    </location>
    <ligand>
        <name>Zn(2+)</name>
        <dbReference type="ChEBI" id="CHEBI:29105"/>
    </ligand>
</feature>
<feature type="binding site" evidence="1">
    <location>
        <position position="1217"/>
    </location>
    <ligand>
        <name>Mg(2+)</name>
        <dbReference type="ChEBI" id="CHEBI:18420"/>
        <label>3</label>
        <note>catalytic; for integrase activity</note>
    </ligand>
</feature>
<feature type="binding site" evidence="1">
    <location>
        <position position="1269"/>
    </location>
    <ligand>
        <name>Mg(2+)</name>
        <dbReference type="ChEBI" id="CHEBI:18420"/>
        <label>3</label>
        <note>catalytic; for integrase activity</note>
    </ligand>
</feature>
<feature type="binding site" evidence="5">
    <location>
        <position position="1305"/>
    </location>
    <ligand>
        <name>Mg(2+)</name>
        <dbReference type="ChEBI" id="CHEBI:18420"/>
        <label>3</label>
        <note>catalytic; for integrase activity</note>
    </ligand>
</feature>
<feature type="site" description="Cleavage; by viral protease" evidence="1">
    <location>
        <begin position="135"/>
        <end position="136"/>
    </location>
</feature>
<feature type="site" description="Cis/trans isomerization of proline peptide bond; by human PPIA/CYPA" evidence="1">
    <location>
        <begin position="224"/>
        <end position="225"/>
    </location>
</feature>
<feature type="site" description="Cleavage; by viral protease" evidence="1">
    <location>
        <begin position="366"/>
        <end position="367"/>
    </location>
</feature>
<feature type="site" description="Cleavage; by viral protease" evidence="1">
    <location>
        <begin position="380"/>
        <end position="381"/>
    </location>
</feature>
<feature type="site" description="Cleavage; by viral protease" evidence="8">
    <location>
        <begin position="435"/>
        <end position="436"/>
    </location>
</feature>
<feature type="site" description="Cleavage; by viral protease" evidence="1">
    <location>
        <begin position="443"/>
        <end position="444"/>
    </location>
</feature>
<feature type="site" description="Cleavage; by viral protease" evidence="1">
    <location>
        <begin position="494"/>
        <end position="495"/>
    </location>
</feature>
<feature type="site" description="Cleavage; by viral protease" evidence="1">
    <location>
        <begin position="593"/>
        <end position="594"/>
    </location>
</feature>
<feature type="site" description="Essential for RT p66/p51 heterodimerization" evidence="1">
    <location>
        <position position="994"/>
    </location>
</feature>
<feature type="site" description="In-frame UAA termination codon">
    <location>
        <position position="1000"/>
    </location>
</feature>
<feature type="site" description="Essential for RT p66/p51 heterodimerization" evidence="1">
    <location>
        <position position="1007"/>
    </location>
</feature>
<feature type="site" description="Cleavage; by viral protease; partial" evidence="1">
    <location>
        <begin position="1033"/>
        <end position="1034"/>
    </location>
</feature>
<feature type="site" description="Cleavage; by viral protease" evidence="1">
    <location>
        <begin position="1153"/>
        <end position="1154"/>
    </location>
</feature>
<feature type="modified residue" description="Phosphotyrosine; by host" evidence="1">
    <location>
        <position position="135"/>
    </location>
</feature>
<feature type="lipid moiety-binding region" description="N-myristoyl glycine; by host" evidence="18">
    <location>
        <position position="2"/>
    </location>
</feature>
<feature type="turn" evidence="20">
    <location>
        <begin position="396"/>
        <end position="398"/>
    </location>
</feature>
<feature type="strand" evidence="20">
    <location>
        <begin position="401"/>
        <end position="403"/>
    </location>
</feature>
<feature type="helix" evidence="20">
    <location>
        <begin position="405"/>
        <end position="407"/>
    </location>
</feature>
<feature type="turn" evidence="20">
    <location>
        <begin position="417"/>
        <end position="419"/>
    </location>
</feature>
<feature type="strand" evidence="20">
    <location>
        <begin position="422"/>
        <end position="424"/>
    </location>
</feature>
<feature type="helix" evidence="20">
    <location>
        <begin position="426"/>
        <end position="428"/>
    </location>
</feature>